<keyword id="KW-0004">4Fe-4S</keyword>
<keyword id="KW-0342">GTP-binding</keyword>
<keyword id="KW-0408">Iron</keyword>
<keyword id="KW-0411">Iron-sulfur</keyword>
<keyword id="KW-0456">Lyase</keyword>
<keyword id="KW-0479">Metal-binding</keyword>
<keyword id="KW-0501">Molybdenum cofactor biosynthesis</keyword>
<keyword id="KW-0547">Nucleotide-binding</keyword>
<keyword id="KW-0949">S-adenosyl-L-methionine</keyword>
<gene>
    <name evidence="1" type="primary">moaA</name>
    <name type="ordered locus">SeAg_B0837</name>
</gene>
<sequence length="329" mass="37002">MASQLTDAFARKFYYLRLSITDVCNFRCTYCLPDGYKPGGVTNNGFLTVDEIRRVTRAFASLGTEKVRLTGGEPSLRRDFTDIIAAVGENDAIRQIAVTTNGYRLARDAANWREAGLTGVNVSVDSLDARQFHAITGQDKFRQVMAGIDAAFDAGFEKVKVNTVLMRDVNHHQLDTFLAWIQPRPIQLRFIELMETGEGSDLFRKHHISGQVLRDELIKRGWIHQLRQRSDGPAQVFCHPDYAGEIGLIMPYEKDFCATCNRLRVSSVGKLHLCLFGDGGVSLRDLLQDDAQQYALEERISDALREKKQTHFLHQSNTGITQNLSYIGG</sequence>
<comment type="function">
    <text evidence="1">Catalyzes the cyclization of GTP to (8S)-3',8-cyclo-7,8-dihydroguanosine 5'-triphosphate.</text>
</comment>
<comment type="catalytic activity">
    <reaction evidence="1">
        <text>GTP + AH2 + S-adenosyl-L-methionine = (8S)-3',8-cyclo-7,8-dihydroguanosine 5'-triphosphate + 5'-deoxyadenosine + L-methionine + A + H(+)</text>
        <dbReference type="Rhea" id="RHEA:49576"/>
        <dbReference type="ChEBI" id="CHEBI:13193"/>
        <dbReference type="ChEBI" id="CHEBI:15378"/>
        <dbReference type="ChEBI" id="CHEBI:17319"/>
        <dbReference type="ChEBI" id="CHEBI:17499"/>
        <dbReference type="ChEBI" id="CHEBI:37565"/>
        <dbReference type="ChEBI" id="CHEBI:57844"/>
        <dbReference type="ChEBI" id="CHEBI:59789"/>
        <dbReference type="ChEBI" id="CHEBI:131766"/>
        <dbReference type="EC" id="4.1.99.22"/>
    </reaction>
</comment>
<comment type="cofactor">
    <cofactor evidence="1">
        <name>[4Fe-4S] cluster</name>
        <dbReference type="ChEBI" id="CHEBI:49883"/>
    </cofactor>
    <text evidence="1">Binds 2 [4Fe-4S] clusters. Binds 1 [4Fe-4S] cluster coordinated with 3 cysteines and an exchangeable S-adenosyl-L-methionine and 1 [4Fe-4S] cluster coordinated with 3 cysteines and the GTP-derived substrate.</text>
</comment>
<comment type="pathway">
    <text evidence="1">Cofactor biosynthesis; molybdopterin biosynthesis.</text>
</comment>
<comment type="subunit">
    <text evidence="1">Monomer and homodimer.</text>
</comment>
<comment type="similarity">
    <text evidence="1">Belongs to the radical SAM superfamily. MoaA family.</text>
</comment>
<feature type="chain" id="PRO_1000139339" description="GTP 3',8-cyclase">
    <location>
        <begin position="1"/>
        <end position="329"/>
    </location>
</feature>
<feature type="domain" description="Radical SAM core" evidence="2">
    <location>
        <begin position="8"/>
        <end position="234"/>
    </location>
</feature>
<feature type="binding site" evidence="1">
    <location>
        <position position="17"/>
    </location>
    <ligand>
        <name>GTP</name>
        <dbReference type="ChEBI" id="CHEBI:37565"/>
    </ligand>
</feature>
<feature type="binding site" evidence="1">
    <location>
        <position position="24"/>
    </location>
    <ligand>
        <name>[4Fe-4S] cluster</name>
        <dbReference type="ChEBI" id="CHEBI:49883"/>
        <label>1</label>
        <note>4Fe-4S-S-AdoMet</note>
    </ligand>
</feature>
<feature type="binding site" evidence="1">
    <location>
        <position position="28"/>
    </location>
    <ligand>
        <name>[4Fe-4S] cluster</name>
        <dbReference type="ChEBI" id="CHEBI:49883"/>
        <label>1</label>
        <note>4Fe-4S-S-AdoMet</note>
    </ligand>
</feature>
<feature type="binding site" evidence="1">
    <location>
        <position position="30"/>
    </location>
    <ligand>
        <name>S-adenosyl-L-methionine</name>
        <dbReference type="ChEBI" id="CHEBI:59789"/>
    </ligand>
</feature>
<feature type="binding site" evidence="1">
    <location>
        <position position="31"/>
    </location>
    <ligand>
        <name>[4Fe-4S] cluster</name>
        <dbReference type="ChEBI" id="CHEBI:49883"/>
        <label>1</label>
        <note>4Fe-4S-S-AdoMet</note>
    </ligand>
</feature>
<feature type="binding site" evidence="1">
    <location>
        <position position="68"/>
    </location>
    <ligand>
        <name>GTP</name>
        <dbReference type="ChEBI" id="CHEBI:37565"/>
    </ligand>
</feature>
<feature type="binding site" evidence="1">
    <location>
        <position position="72"/>
    </location>
    <ligand>
        <name>S-adenosyl-L-methionine</name>
        <dbReference type="ChEBI" id="CHEBI:59789"/>
    </ligand>
</feature>
<feature type="binding site" evidence="1">
    <location>
        <position position="99"/>
    </location>
    <ligand>
        <name>GTP</name>
        <dbReference type="ChEBI" id="CHEBI:37565"/>
    </ligand>
</feature>
<feature type="binding site" evidence="1">
    <location>
        <position position="123"/>
    </location>
    <ligand>
        <name>S-adenosyl-L-methionine</name>
        <dbReference type="ChEBI" id="CHEBI:59789"/>
    </ligand>
</feature>
<feature type="binding site" evidence="1">
    <location>
        <position position="160"/>
    </location>
    <ligand>
        <name>GTP</name>
        <dbReference type="ChEBI" id="CHEBI:37565"/>
    </ligand>
</feature>
<feature type="binding site" evidence="1">
    <location>
        <position position="194"/>
    </location>
    <ligand>
        <name>S-adenosyl-L-methionine</name>
        <dbReference type="ChEBI" id="CHEBI:59789"/>
    </ligand>
</feature>
<feature type="binding site" evidence="1">
    <location>
        <position position="257"/>
    </location>
    <ligand>
        <name>[4Fe-4S] cluster</name>
        <dbReference type="ChEBI" id="CHEBI:49883"/>
        <label>2</label>
        <note>4Fe-4S-substrate</note>
    </ligand>
</feature>
<feature type="binding site" evidence="1">
    <location>
        <position position="260"/>
    </location>
    <ligand>
        <name>[4Fe-4S] cluster</name>
        <dbReference type="ChEBI" id="CHEBI:49883"/>
        <label>2</label>
        <note>4Fe-4S-substrate</note>
    </ligand>
</feature>
<feature type="binding site" evidence="1">
    <location>
        <begin position="262"/>
        <end position="264"/>
    </location>
    <ligand>
        <name>GTP</name>
        <dbReference type="ChEBI" id="CHEBI:37565"/>
    </ligand>
</feature>
<feature type="binding site" evidence="1">
    <location>
        <position position="274"/>
    </location>
    <ligand>
        <name>[4Fe-4S] cluster</name>
        <dbReference type="ChEBI" id="CHEBI:49883"/>
        <label>2</label>
        <note>4Fe-4S-substrate</note>
    </ligand>
</feature>
<organism>
    <name type="scientific">Salmonella agona (strain SL483)</name>
    <dbReference type="NCBI Taxonomy" id="454166"/>
    <lineage>
        <taxon>Bacteria</taxon>
        <taxon>Pseudomonadati</taxon>
        <taxon>Pseudomonadota</taxon>
        <taxon>Gammaproteobacteria</taxon>
        <taxon>Enterobacterales</taxon>
        <taxon>Enterobacteriaceae</taxon>
        <taxon>Salmonella</taxon>
    </lineage>
</organism>
<accession>B5F079</accession>
<proteinExistence type="inferred from homology"/>
<name>MOAA_SALA4</name>
<dbReference type="EC" id="4.1.99.22" evidence="1"/>
<dbReference type="EMBL" id="CP001138">
    <property type="protein sequence ID" value="ACH48999.1"/>
    <property type="molecule type" value="Genomic_DNA"/>
</dbReference>
<dbReference type="RefSeq" id="WP_000168180.1">
    <property type="nucleotide sequence ID" value="NC_011149.1"/>
</dbReference>
<dbReference type="SMR" id="B5F079"/>
<dbReference type="KEGG" id="sea:SeAg_B0837"/>
<dbReference type="HOGENOM" id="CLU_009273_0_1_6"/>
<dbReference type="UniPathway" id="UPA00344"/>
<dbReference type="Proteomes" id="UP000008819">
    <property type="component" value="Chromosome"/>
</dbReference>
<dbReference type="GO" id="GO:0051539">
    <property type="term" value="F:4 iron, 4 sulfur cluster binding"/>
    <property type="evidence" value="ECO:0007669"/>
    <property type="project" value="UniProtKB-UniRule"/>
</dbReference>
<dbReference type="GO" id="GO:0061799">
    <property type="term" value="F:cyclic pyranopterin monophosphate synthase activity"/>
    <property type="evidence" value="ECO:0007669"/>
    <property type="project" value="TreeGrafter"/>
</dbReference>
<dbReference type="GO" id="GO:0061798">
    <property type="term" value="F:GTP 3',8'-cyclase activity"/>
    <property type="evidence" value="ECO:0007669"/>
    <property type="project" value="UniProtKB-UniRule"/>
</dbReference>
<dbReference type="GO" id="GO:0005525">
    <property type="term" value="F:GTP binding"/>
    <property type="evidence" value="ECO:0007669"/>
    <property type="project" value="UniProtKB-UniRule"/>
</dbReference>
<dbReference type="GO" id="GO:0046872">
    <property type="term" value="F:metal ion binding"/>
    <property type="evidence" value="ECO:0007669"/>
    <property type="project" value="UniProtKB-KW"/>
</dbReference>
<dbReference type="GO" id="GO:1904047">
    <property type="term" value="F:S-adenosyl-L-methionine binding"/>
    <property type="evidence" value="ECO:0007669"/>
    <property type="project" value="UniProtKB-UniRule"/>
</dbReference>
<dbReference type="GO" id="GO:0006777">
    <property type="term" value="P:Mo-molybdopterin cofactor biosynthetic process"/>
    <property type="evidence" value="ECO:0007669"/>
    <property type="project" value="UniProtKB-UniRule"/>
</dbReference>
<dbReference type="CDD" id="cd01335">
    <property type="entry name" value="Radical_SAM"/>
    <property type="match status" value="1"/>
</dbReference>
<dbReference type="CDD" id="cd21117">
    <property type="entry name" value="Twitch_MoaA"/>
    <property type="match status" value="1"/>
</dbReference>
<dbReference type="FunFam" id="3.20.20.70:FF:000057">
    <property type="entry name" value="GTP 3',8-cyclase"/>
    <property type="match status" value="1"/>
</dbReference>
<dbReference type="Gene3D" id="3.20.20.70">
    <property type="entry name" value="Aldolase class I"/>
    <property type="match status" value="1"/>
</dbReference>
<dbReference type="HAMAP" id="MF_01225_B">
    <property type="entry name" value="MoaA_B"/>
    <property type="match status" value="1"/>
</dbReference>
<dbReference type="InterPro" id="IPR013785">
    <property type="entry name" value="Aldolase_TIM"/>
</dbReference>
<dbReference type="InterPro" id="IPR006638">
    <property type="entry name" value="Elp3/MiaA/NifB-like_rSAM"/>
</dbReference>
<dbReference type="InterPro" id="IPR013483">
    <property type="entry name" value="MoaA"/>
</dbReference>
<dbReference type="InterPro" id="IPR000385">
    <property type="entry name" value="MoaA_NifB_PqqE_Fe-S-bd_CS"/>
</dbReference>
<dbReference type="InterPro" id="IPR010505">
    <property type="entry name" value="MoaA_twitch"/>
</dbReference>
<dbReference type="InterPro" id="IPR050105">
    <property type="entry name" value="MoCo_biosynth_MoaA/MoaC"/>
</dbReference>
<dbReference type="InterPro" id="IPR007197">
    <property type="entry name" value="rSAM"/>
</dbReference>
<dbReference type="NCBIfam" id="TIGR02666">
    <property type="entry name" value="moaA"/>
    <property type="match status" value="1"/>
</dbReference>
<dbReference type="PANTHER" id="PTHR22960:SF28">
    <property type="entry name" value="GTP 3',8-CYCLASE"/>
    <property type="match status" value="1"/>
</dbReference>
<dbReference type="PANTHER" id="PTHR22960">
    <property type="entry name" value="MOLYBDOPTERIN COFACTOR SYNTHESIS PROTEIN A"/>
    <property type="match status" value="1"/>
</dbReference>
<dbReference type="Pfam" id="PF06463">
    <property type="entry name" value="Mob_synth_C"/>
    <property type="match status" value="1"/>
</dbReference>
<dbReference type="Pfam" id="PF04055">
    <property type="entry name" value="Radical_SAM"/>
    <property type="match status" value="1"/>
</dbReference>
<dbReference type="SFLD" id="SFLDG01383">
    <property type="entry name" value="cyclic_pyranopterin_phosphate"/>
    <property type="match status" value="1"/>
</dbReference>
<dbReference type="SFLD" id="SFLDS00029">
    <property type="entry name" value="Radical_SAM"/>
    <property type="match status" value="1"/>
</dbReference>
<dbReference type="SMART" id="SM00729">
    <property type="entry name" value="Elp3"/>
    <property type="match status" value="1"/>
</dbReference>
<dbReference type="SUPFAM" id="SSF102114">
    <property type="entry name" value="Radical SAM enzymes"/>
    <property type="match status" value="1"/>
</dbReference>
<dbReference type="PROSITE" id="PS01305">
    <property type="entry name" value="MOAA_NIFB_PQQE"/>
    <property type="match status" value="1"/>
</dbReference>
<dbReference type="PROSITE" id="PS51918">
    <property type="entry name" value="RADICAL_SAM"/>
    <property type="match status" value="1"/>
</dbReference>
<protein>
    <recommendedName>
        <fullName evidence="1">GTP 3',8-cyclase</fullName>
        <ecNumber evidence="1">4.1.99.22</ecNumber>
    </recommendedName>
    <alternativeName>
        <fullName evidence="1">Molybdenum cofactor biosynthesis protein A</fullName>
    </alternativeName>
</protein>
<reference key="1">
    <citation type="journal article" date="2011" name="J. Bacteriol.">
        <title>Comparative genomics of 28 Salmonella enterica isolates: evidence for CRISPR-mediated adaptive sublineage evolution.</title>
        <authorList>
            <person name="Fricke W.F."/>
            <person name="Mammel M.K."/>
            <person name="McDermott P.F."/>
            <person name="Tartera C."/>
            <person name="White D.G."/>
            <person name="Leclerc J.E."/>
            <person name="Ravel J."/>
            <person name="Cebula T.A."/>
        </authorList>
    </citation>
    <scope>NUCLEOTIDE SEQUENCE [LARGE SCALE GENOMIC DNA]</scope>
    <source>
        <strain>SL483</strain>
    </source>
</reference>
<evidence type="ECO:0000255" key="1">
    <source>
        <dbReference type="HAMAP-Rule" id="MF_01225"/>
    </source>
</evidence>
<evidence type="ECO:0000255" key="2">
    <source>
        <dbReference type="PROSITE-ProRule" id="PRU01266"/>
    </source>
</evidence>